<gene>
    <name type="primary">CALML4</name>
</gene>
<sequence length="153" mass="17826">MAKFLSQDQINEYKECFSLYDKQQRGKIKATDLLTVMRCLGASPTPGEAQRHLQTHRIDRNGELDFSTFLTIMHMQIKQEDPKKEILLAMLMADKEKKGYIMASELRSKLMQLGEKLTHKEVEDLFREAGIEPNGKVKYDEFIQKLTIPVRDY</sequence>
<proteinExistence type="evidence at transcript level"/>
<reference key="1">
    <citation type="submission" date="2005-08" db="EMBL/GenBank/DDBJ databases">
        <authorList>
            <consortium name="NIH - Mammalian Gene Collection (MGC) project"/>
        </authorList>
    </citation>
    <scope>NUCLEOTIDE SEQUENCE [LARGE SCALE MRNA]</scope>
    <source>
        <strain>Crossbred X Angus</strain>
        <tissue>Ileum</tissue>
    </source>
</reference>
<accession>Q3T0E8</accession>
<protein>
    <recommendedName>
        <fullName>Calmodulin-like protein 4</fullName>
    </recommendedName>
</protein>
<organism>
    <name type="scientific">Bos taurus</name>
    <name type="common">Bovine</name>
    <dbReference type="NCBI Taxonomy" id="9913"/>
    <lineage>
        <taxon>Eukaryota</taxon>
        <taxon>Metazoa</taxon>
        <taxon>Chordata</taxon>
        <taxon>Craniata</taxon>
        <taxon>Vertebrata</taxon>
        <taxon>Euteleostomi</taxon>
        <taxon>Mammalia</taxon>
        <taxon>Eutheria</taxon>
        <taxon>Laurasiatheria</taxon>
        <taxon>Artiodactyla</taxon>
        <taxon>Ruminantia</taxon>
        <taxon>Pecora</taxon>
        <taxon>Bovidae</taxon>
        <taxon>Bovinae</taxon>
        <taxon>Bos</taxon>
    </lineage>
</organism>
<keyword id="KW-0966">Cell projection</keyword>
<keyword id="KW-1185">Reference proteome</keyword>
<keyword id="KW-0677">Repeat</keyword>
<dbReference type="EMBL" id="BC102423">
    <property type="protein sequence ID" value="AAI02424.1"/>
    <property type="molecule type" value="mRNA"/>
</dbReference>
<dbReference type="RefSeq" id="NP_001029843.1">
    <property type="nucleotide sequence ID" value="NM_001034671.2"/>
</dbReference>
<dbReference type="SMR" id="Q3T0E8"/>
<dbReference type="FunCoup" id="Q3T0E8">
    <property type="interactions" value="555"/>
</dbReference>
<dbReference type="STRING" id="9913.ENSBTAP00000036380"/>
<dbReference type="PaxDb" id="9913-ENSBTAP00000036380"/>
<dbReference type="GeneID" id="539277"/>
<dbReference type="KEGG" id="bta:539277"/>
<dbReference type="CTD" id="91860"/>
<dbReference type="eggNOG" id="KOG0027">
    <property type="taxonomic scope" value="Eukaryota"/>
</dbReference>
<dbReference type="HOGENOM" id="CLU_061288_2_0_1"/>
<dbReference type="InParanoid" id="Q3T0E8"/>
<dbReference type="OrthoDB" id="435273at2759"/>
<dbReference type="TreeFam" id="TF300912"/>
<dbReference type="Proteomes" id="UP000009136">
    <property type="component" value="Unplaced"/>
</dbReference>
<dbReference type="GO" id="GO:0005737">
    <property type="term" value="C:cytoplasm"/>
    <property type="evidence" value="ECO:0000318"/>
    <property type="project" value="GO_Central"/>
</dbReference>
<dbReference type="GO" id="GO:0005902">
    <property type="term" value="C:microvillus"/>
    <property type="evidence" value="ECO:0000250"/>
    <property type="project" value="UniProtKB"/>
</dbReference>
<dbReference type="GO" id="GO:0005509">
    <property type="term" value="F:calcium ion binding"/>
    <property type="evidence" value="ECO:0000318"/>
    <property type="project" value="GO_Central"/>
</dbReference>
<dbReference type="GO" id="GO:0030234">
    <property type="term" value="F:enzyme regulator activity"/>
    <property type="evidence" value="ECO:0000318"/>
    <property type="project" value="GO_Central"/>
</dbReference>
<dbReference type="GO" id="GO:1904970">
    <property type="term" value="P:brush border assembly"/>
    <property type="evidence" value="ECO:0000250"/>
    <property type="project" value="UniProtKB"/>
</dbReference>
<dbReference type="GO" id="GO:0000226">
    <property type="term" value="P:microtubule cytoskeleton organization"/>
    <property type="evidence" value="ECO:0000318"/>
    <property type="project" value="GO_Central"/>
</dbReference>
<dbReference type="CDD" id="cd00051">
    <property type="entry name" value="EFh"/>
    <property type="match status" value="2"/>
</dbReference>
<dbReference type="FunFam" id="1.10.238.10:FF:000191">
    <property type="entry name" value="Calmodulin like 4"/>
    <property type="match status" value="1"/>
</dbReference>
<dbReference type="Gene3D" id="1.10.238.10">
    <property type="entry name" value="EF-hand"/>
    <property type="match status" value="1"/>
</dbReference>
<dbReference type="InterPro" id="IPR050230">
    <property type="entry name" value="CALM/Myosin/TropC-like"/>
</dbReference>
<dbReference type="InterPro" id="IPR011992">
    <property type="entry name" value="EF-hand-dom_pair"/>
</dbReference>
<dbReference type="InterPro" id="IPR002048">
    <property type="entry name" value="EF_hand_dom"/>
</dbReference>
<dbReference type="PANTHER" id="PTHR23048:SF45">
    <property type="entry name" value="CALMODULIN LIKE 4"/>
    <property type="match status" value="1"/>
</dbReference>
<dbReference type="PANTHER" id="PTHR23048">
    <property type="entry name" value="MYOSIN LIGHT CHAIN 1, 3"/>
    <property type="match status" value="1"/>
</dbReference>
<dbReference type="Pfam" id="PF13499">
    <property type="entry name" value="EF-hand_7"/>
    <property type="match status" value="1"/>
</dbReference>
<dbReference type="SMART" id="SM00054">
    <property type="entry name" value="EFh"/>
    <property type="match status" value="4"/>
</dbReference>
<dbReference type="SUPFAM" id="SSF47473">
    <property type="entry name" value="EF-hand"/>
    <property type="match status" value="1"/>
</dbReference>
<dbReference type="PROSITE" id="PS50222">
    <property type="entry name" value="EF_HAND_2"/>
    <property type="match status" value="4"/>
</dbReference>
<evidence type="ECO:0000250" key="1">
    <source>
        <dbReference type="UniProtKB" id="Q96GE6"/>
    </source>
</evidence>
<evidence type="ECO:0000255" key="2">
    <source>
        <dbReference type="PROSITE-ProRule" id="PRU00448"/>
    </source>
</evidence>
<evidence type="ECO:0000305" key="3"/>
<name>CALL4_BOVIN</name>
<comment type="function">
    <text evidence="1">As part of the intermicrovillar adhesion complex/IMAC plays a role in epithelial brush border differentiation, controlling microvilli organization and length. Acts as a light chain for MYO7B and is required for efficient targeting of the IMAC to the tips of border brush microvilli.</text>
</comment>
<comment type="subunit">
    <text evidence="1">Interacts with MYO7B; the interaction mediates the association of CALML4 with the IMAC/intermicrovillar adhesion complex. Interacts with MYO7A.</text>
</comment>
<comment type="subcellular location">
    <subcellularLocation>
        <location evidence="1">Cell projection</location>
        <location evidence="1">Microvillus</location>
    </subcellularLocation>
    <text evidence="1">Enriched at the distal tips of enterocyte microvilli.</text>
</comment>
<comment type="similarity">
    <text evidence="3">Belongs to the calmodulin family.</text>
</comment>
<feature type="chain" id="PRO_0000314932" description="Calmodulin-like protein 4">
    <location>
        <begin position="1"/>
        <end position="153"/>
    </location>
</feature>
<feature type="domain" description="EF-hand 1" evidence="2">
    <location>
        <begin position="8"/>
        <end position="43"/>
    </location>
</feature>
<feature type="domain" description="EF-hand 2" evidence="2">
    <location>
        <begin position="44"/>
        <end position="79"/>
    </location>
</feature>
<feature type="domain" description="EF-hand 3" evidence="2">
    <location>
        <begin position="81"/>
        <end position="116"/>
    </location>
</feature>
<feature type="domain" description="EF-hand 4" evidence="2">
    <location>
        <begin position="117"/>
        <end position="152"/>
    </location>
</feature>